<gene>
    <name evidence="1" type="primary">slyX</name>
    <name type="ordered locus">UTI89_C3850</name>
</gene>
<organism>
    <name type="scientific">Escherichia coli (strain UTI89 / UPEC)</name>
    <dbReference type="NCBI Taxonomy" id="364106"/>
    <lineage>
        <taxon>Bacteria</taxon>
        <taxon>Pseudomonadati</taxon>
        <taxon>Pseudomonadota</taxon>
        <taxon>Gammaproteobacteria</taxon>
        <taxon>Enterobacterales</taxon>
        <taxon>Enterobacteriaceae</taxon>
        <taxon>Escherichia</taxon>
    </lineage>
</organism>
<evidence type="ECO:0000255" key="1">
    <source>
        <dbReference type="HAMAP-Rule" id="MF_00715"/>
    </source>
</evidence>
<evidence type="ECO:0000256" key="2">
    <source>
        <dbReference type="SAM" id="MobiDB-lite"/>
    </source>
</evidence>
<dbReference type="EMBL" id="CP000243">
    <property type="protein sequence ID" value="ABE09279.1"/>
    <property type="molecule type" value="Genomic_DNA"/>
</dbReference>
<dbReference type="RefSeq" id="WP_001153615.1">
    <property type="nucleotide sequence ID" value="NZ_CP064825.1"/>
</dbReference>
<dbReference type="SMR" id="Q1R5T5"/>
<dbReference type="KEGG" id="eci:UTI89_C3850"/>
<dbReference type="HOGENOM" id="CLU_180796_4_2_6"/>
<dbReference type="Proteomes" id="UP000001952">
    <property type="component" value="Chromosome"/>
</dbReference>
<dbReference type="Gene3D" id="1.20.5.300">
    <property type="match status" value="1"/>
</dbReference>
<dbReference type="HAMAP" id="MF_00715">
    <property type="entry name" value="SlyX"/>
    <property type="match status" value="1"/>
</dbReference>
<dbReference type="InterPro" id="IPR007236">
    <property type="entry name" value="SlyX"/>
</dbReference>
<dbReference type="NCBIfam" id="NF002750">
    <property type="entry name" value="PRK02793.1"/>
    <property type="match status" value="1"/>
</dbReference>
<dbReference type="PANTHER" id="PTHR36508">
    <property type="entry name" value="PROTEIN SLYX"/>
    <property type="match status" value="1"/>
</dbReference>
<dbReference type="PANTHER" id="PTHR36508:SF1">
    <property type="entry name" value="PROTEIN SLYX"/>
    <property type="match status" value="1"/>
</dbReference>
<dbReference type="Pfam" id="PF04102">
    <property type="entry name" value="SlyX"/>
    <property type="match status" value="1"/>
</dbReference>
<name>SLYX_ECOUT</name>
<protein>
    <recommendedName>
        <fullName evidence="1">Protein SlyX</fullName>
    </recommendedName>
</protein>
<sequence>MQDLSLEARLAELESRLAFQEITIEELNVTVTAHEMEMAKLRDHLRLLTEKLKASQPSNIASQAEETPPPHY</sequence>
<reference key="1">
    <citation type="journal article" date="2006" name="Proc. Natl. Acad. Sci. U.S.A.">
        <title>Identification of genes subject to positive selection in uropathogenic strains of Escherichia coli: a comparative genomics approach.</title>
        <authorList>
            <person name="Chen S.L."/>
            <person name="Hung C.-S."/>
            <person name="Xu J."/>
            <person name="Reigstad C.S."/>
            <person name="Magrini V."/>
            <person name="Sabo A."/>
            <person name="Blasiar D."/>
            <person name="Bieri T."/>
            <person name="Meyer R.R."/>
            <person name="Ozersky P."/>
            <person name="Armstrong J.R."/>
            <person name="Fulton R.S."/>
            <person name="Latreille J.P."/>
            <person name="Spieth J."/>
            <person name="Hooton T.M."/>
            <person name="Mardis E.R."/>
            <person name="Hultgren S.J."/>
            <person name="Gordon J.I."/>
        </authorList>
    </citation>
    <scope>NUCLEOTIDE SEQUENCE [LARGE SCALE GENOMIC DNA]</scope>
    <source>
        <strain>UTI89 / UPEC</strain>
    </source>
</reference>
<feature type="chain" id="PRO_1000045713" description="Protein SlyX">
    <location>
        <begin position="1"/>
        <end position="72"/>
    </location>
</feature>
<feature type="region of interest" description="Disordered" evidence="2">
    <location>
        <begin position="52"/>
        <end position="72"/>
    </location>
</feature>
<feature type="compositionally biased region" description="Polar residues" evidence="2">
    <location>
        <begin position="55"/>
        <end position="65"/>
    </location>
</feature>
<proteinExistence type="inferred from homology"/>
<accession>Q1R5T5</accession>
<comment type="similarity">
    <text evidence="1">Belongs to the SlyX family.</text>
</comment>